<protein>
    <recommendedName>
        <fullName evidence="1">Protoheme IX farnesyltransferase 1</fullName>
        <ecNumber evidence="1">2.5.1.141</ecNumber>
    </recommendedName>
    <alternativeName>
        <fullName evidence="1">Heme B farnesyltransferase 1</fullName>
    </alternativeName>
    <alternativeName>
        <fullName evidence="1">Heme O synthase 1</fullName>
    </alternativeName>
</protein>
<dbReference type="EC" id="2.5.1.141" evidence="1"/>
<dbReference type="EMBL" id="AM420293">
    <property type="protein sequence ID" value="CAM00635.1"/>
    <property type="status" value="ALT_INIT"/>
    <property type="molecule type" value="Genomic_DNA"/>
</dbReference>
<dbReference type="RefSeq" id="WP_044547166.1">
    <property type="nucleotide sequence ID" value="NC_009142.1"/>
</dbReference>
<dbReference type="SMR" id="A4F9B0"/>
<dbReference type="STRING" id="405948.SACE_1312"/>
<dbReference type="KEGG" id="sen:SACE_1312"/>
<dbReference type="eggNOG" id="COG0109">
    <property type="taxonomic scope" value="Bacteria"/>
</dbReference>
<dbReference type="HOGENOM" id="CLU_029631_0_1_11"/>
<dbReference type="OrthoDB" id="9814417at2"/>
<dbReference type="UniPathway" id="UPA00834">
    <property type="reaction ID" value="UER00712"/>
</dbReference>
<dbReference type="Proteomes" id="UP000006728">
    <property type="component" value="Chromosome"/>
</dbReference>
<dbReference type="GO" id="GO:0005886">
    <property type="term" value="C:plasma membrane"/>
    <property type="evidence" value="ECO:0007669"/>
    <property type="project" value="UniProtKB-SubCell"/>
</dbReference>
<dbReference type="GO" id="GO:0008495">
    <property type="term" value="F:protoheme IX farnesyltransferase activity"/>
    <property type="evidence" value="ECO:0007669"/>
    <property type="project" value="UniProtKB-UniRule"/>
</dbReference>
<dbReference type="GO" id="GO:0048034">
    <property type="term" value="P:heme O biosynthetic process"/>
    <property type="evidence" value="ECO:0007669"/>
    <property type="project" value="UniProtKB-UniRule"/>
</dbReference>
<dbReference type="CDD" id="cd13957">
    <property type="entry name" value="PT_UbiA_Cox10"/>
    <property type="match status" value="1"/>
</dbReference>
<dbReference type="FunFam" id="1.10.357.140:FF:000001">
    <property type="entry name" value="Protoheme IX farnesyltransferase"/>
    <property type="match status" value="1"/>
</dbReference>
<dbReference type="Gene3D" id="1.10.357.140">
    <property type="entry name" value="UbiA prenyltransferase"/>
    <property type="match status" value="1"/>
</dbReference>
<dbReference type="HAMAP" id="MF_00154">
    <property type="entry name" value="CyoE_CtaB"/>
    <property type="match status" value="1"/>
</dbReference>
<dbReference type="InterPro" id="IPR006369">
    <property type="entry name" value="Protohaem_IX_farnesylTrfase"/>
</dbReference>
<dbReference type="InterPro" id="IPR000537">
    <property type="entry name" value="UbiA_prenyltransferase"/>
</dbReference>
<dbReference type="InterPro" id="IPR030470">
    <property type="entry name" value="UbiA_prenylTrfase_CS"/>
</dbReference>
<dbReference type="InterPro" id="IPR044878">
    <property type="entry name" value="UbiA_sf"/>
</dbReference>
<dbReference type="NCBIfam" id="TIGR01473">
    <property type="entry name" value="cyoE_ctaB"/>
    <property type="match status" value="1"/>
</dbReference>
<dbReference type="NCBIfam" id="NF003349">
    <property type="entry name" value="PRK04375.1-2"/>
    <property type="match status" value="1"/>
</dbReference>
<dbReference type="PANTHER" id="PTHR43448:SF7">
    <property type="entry name" value="4-HYDROXYBENZOATE SOLANESYLTRANSFERASE"/>
    <property type="match status" value="1"/>
</dbReference>
<dbReference type="PANTHER" id="PTHR43448">
    <property type="entry name" value="PROTOHEME IX FARNESYLTRANSFERASE, MITOCHONDRIAL"/>
    <property type="match status" value="1"/>
</dbReference>
<dbReference type="Pfam" id="PF01040">
    <property type="entry name" value="UbiA"/>
    <property type="match status" value="1"/>
</dbReference>
<dbReference type="PROSITE" id="PS00943">
    <property type="entry name" value="UBIA"/>
    <property type="match status" value="1"/>
</dbReference>
<keyword id="KW-1003">Cell membrane</keyword>
<keyword id="KW-0350">Heme biosynthesis</keyword>
<keyword id="KW-0472">Membrane</keyword>
<keyword id="KW-1185">Reference proteome</keyword>
<keyword id="KW-0808">Transferase</keyword>
<keyword id="KW-0812">Transmembrane</keyword>
<keyword id="KW-1133">Transmembrane helix</keyword>
<name>COXX1_SACEN</name>
<proteinExistence type="inferred from homology"/>
<organism>
    <name type="scientific">Saccharopolyspora erythraea (strain ATCC 11635 / DSM 40517 / JCM 4748 / NBRC 13426 / NCIMB 8594 / NRRL 2338)</name>
    <dbReference type="NCBI Taxonomy" id="405948"/>
    <lineage>
        <taxon>Bacteria</taxon>
        <taxon>Bacillati</taxon>
        <taxon>Actinomycetota</taxon>
        <taxon>Actinomycetes</taxon>
        <taxon>Pseudonocardiales</taxon>
        <taxon>Pseudonocardiaceae</taxon>
        <taxon>Saccharopolyspora</taxon>
    </lineage>
</organism>
<sequence>MTAAPAAANNAAPAPKTPRRGVLAAYLALTKPRVIELLLVTTVPAMFLAQRGIPSPWLVLVTLAGGAMSAGSANALNCVADSDIDAVMDRTKKRPLVSYEVPRRSALVFGIVLGVVSFAVLALGANLLAAVLSLAAILFYVFVYTLVLKRRTSQNIVWGGAAGCMPVVIGWAAVTGSVEWPALVMFGVVFLWTPPHFWSLAMKYREDYARAGVPMLPVVATPRQVSARILVYSWATVACTLLLVPATSWVYVAFAVLAGAAFLIVAQRLHNSIRRGHAYNPMKLFHLSNSYLALLFVAIAVDSAVGLPSFVA</sequence>
<gene>
    <name evidence="1" type="primary">ctaB1</name>
    <name type="ordered locus">SACE_1312</name>
</gene>
<comment type="function">
    <text evidence="1">Converts heme B (protoheme IX) to heme O by substitution of the vinyl group on carbon 2 of heme B porphyrin ring with a hydroxyethyl farnesyl side group.</text>
</comment>
<comment type="catalytic activity">
    <reaction evidence="1">
        <text>heme b + (2E,6E)-farnesyl diphosphate + H2O = Fe(II)-heme o + diphosphate</text>
        <dbReference type="Rhea" id="RHEA:28070"/>
        <dbReference type="ChEBI" id="CHEBI:15377"/>
        <dbReference type="ChEBI" id="CHEBI:33019"/>
        <dbReference type="ChEBI" id="CHEBI:60344"/>
        <dbReference type="ChEBI" id="CHEBI:60530"/>
        <dbReference type="ChEBI" id="CHEBI:175763"/>
        <dbReference type="EC" id="2.5.1.141"/>
    </reaction>
</comment>
<comment type="pathway">
    <text evidence="1">Porphyrin-containing compound metabolism; heme O biosynthesis; heme O from protoheme: step 1/1.</text>
</comment>
<comment type="subcellular location">
    <subcellularLocation>
        <location evidence="1">Cell membrane</location>
        <topology evidence="1">Multi-pass membrane protein</topology>
    </subcellularLocation>
</comment>
<comment type="miscellaneous">
    <text evidence="1">Carbon 2 of the heme B porphyrin ring is defined according to the Fischer nomenclature.</text>
</comment>
<comment type="similarity">
    <text evidence="1">Belongs to the UbiA prenyltransferase family. Protoheme IX farnesyltransferase subfamily.</text>
</comment>
<comment type="sequence caution" evidence="2">
    <conflict type="erroneous initiation">
        <sequence resource="EMBL-CDS" id="CAM00635"/>
    </conflict>
</comment>
<feature type="chain" id="PRO_0000327147" description="Protoheme IX farnesyltransferase 1">
    <location>
        <begin position="1"/>
        <end position="312"/>
    </location>
</feature>
<feature type="transmembrane region" description="Helical" evidence="1">
    <location>
        <begin position="21"/>
        <end position="41"/>
    </location>
</feature>
<feature type="transmembrane region" description="Helical" evidence="1">
    <location>
        <begin position="53"/>
        <end position="73"/>
    </location>
</feature>
<feature type="transmembrane region" description="Helical" evidence="1">
    <location>
        <begin position="105"/>
        <end position="125"/>
    </location>
</feature>
<feature type="transmembrane region" description="Helical" evidence="1">
    <location>
        <begin position="127"/>
        <end position="147"/>
    </location>
</feature>
<feature type="transmembrane region" description="Helical" evidence="1">
    <location>
        <begin position="156"/>
        <end position="176"/>
    </location>
</feature>
<feature type="transmembrane region" description="Helical" evidence="1">
    <location>
        <begin position="182"/>
        <end position="202"/>
    </location>
</feature>
<feature type="transmembrane region" description="Helical" evidence="1">
    <location>
        <begin position="225"/>
        <end position="245"/>
    </location>
</feature>
<feature type="transmembrane region" description="Helical" evidence="1">
    <location>
        <begin position="246"/>
        <end position="266"/>
    </location>
</feature>
<feature type="transmembrane region" description="Helical" evidence="1">
    <location>
        <begin position="292"/>
        <end position="312"/>
    </location>
</feature>
<evidence type="ECO:0000255" key="1">
    <source>
        <dbReference type="HAMAP-Rule" id="MF_00154"/>
    </source>
</evidence>
<evidence type="ECO:0000305" key="2"/>
<reference key="1">
    <citation type="journal article" date="2007" name="Nat. Biotechnol.">
        <title>Complete genome sequence of the erythromycin-producing bacterium Saccharopolyspora erythraea NRRL23338.</title>
        <authorList>
            <person name="Oliynyk M."/>
            <person name="Samborskyy M."/>
            <person name="Lester J.B."/>
            <person name="Mironenko T."/>
            <person name="Scott N."/>
            <person name="Dickens S."/>
            <person name="Haydock S.F."/>
            <person name="Leadlay P.F."/>
        </authorList>
    </citation>
    <scope>NUCLEOTIDE SEQUENCE [LARGE SCALE GENOMIC DNA]</scope>
    <source>
        <strain>ATCC 11635 / DSM 40517 / JCM 4748 / NBRC 13426 / NCIMB 8594 / NRRL 2338</strain>
    </source>
</reference>
<accession>A4F9B0</accession>